<keyword id="KW-1185">Reference proteome</keyword>
<keyword id="KW-0687">Ribonucleoprotein</keyword>
<keyword id="KW-0689">Ribosomal protein</keyword>
<keyword id="KW-0694">RNA-binding</keyword>
<keyword id="KW-0699">rRNA-binding</keyword>
<dbReference type="EMBL" id="CP001043">
    <property type="protein sequence ID" value="ACC72009.1"/>
    <property type="molecule type" value="Genomic_DNA"/>
</dbReference>
<dbReference type="RefSeq" id="WP_012402194.1">
    <property type="nucleotide sequence ID" value="NZ_CADFGH010000028.1"/>
</dbReference>
<dbReference type="SMR" id="B2JIG3"/>
<dbReference type="STRING" id="391038.Bphy_2837"/>
<dbReference type="KEGG" id="bph:Bphy_2837"/>
<dbReference type="eggNOG" id="COG0090">
    <property type="taxonomic scope" value="Bacteria"/>
</dbReference>
<dbReference type="HOGENOM" id="CLU_036235_2_1_4"/>
<dbReference type="OrthoDB" id="9778722at2"/>
<dbReference type="Proteomes" id="UP000001192">
    <property type="component" value="Chromosome 1"/>
</dbReference>
<dbReference type="GO" id="GO:0015934">
    <property type="term" value="C:large ribosomal subunit"/>
    <property type="evidence" value="ECO:0007669"/>
    <property type="project" value="InterPro"/>
</dbReference>
<dbReference type="GO" id="GO:0019843">
    <property type="term" value="F:rRNA binding"/>
    <property type="evidence" value="ECO:0007669"/>
    <property type="project" value="UniProtKB-UniRule"/>
</dbReference>
<dbReference type="GO" id="GO:0003735">
    <property type="term" value="F:structural constituent of ribosome"/>
    <property type="evidence" value="ECO:0007669"/>
    <property type="project" value="InterPro"/>
</dbReference>
<dbReference type="GO" id="GO:0016740">
    <property type="term" value="F:transferase activity"/>
    <property type="evidence" value="ECO:0007669"/>
    <property type="project" value="InterPro"/>
</dbReference>
<dbReference type="GO" id="GO:0002181">
    <property type="term" value="P:cytoplasmic translation"/>
    <property type="evidence" value="ECO:0007669"/>
    <property type="project" value="TreeGrafter"/>
</dbReference>
<dbReference type="FunFam" id="2.30.30.30:FF:000001">
    <property type="entry name" value="50S ribosomal protein L2"/>
    <property type="match status" value="1"/>
</dbReference>
<dbReference type="FunFam" id="2.40.50.140:FF:000003">
    <property type="entry name" value="50S ribosomal protein L2"/>
    <property type="match status" value="1"/>
</dbReference>
<dbReference type="FunFam" id="4.10.950.10:FF:000001">
    <property type="entry name" value="50S ribosomal protein L2"/>
    <property type="match status" value="1"/>
</dbReference>
<dbReference type="Gene3D" id="2.30.30.30">
    <property type="match status" value="1"/>
</dbReference>
<dbReference type="Gene3D" id="2.40.50.140">
    <property type="entry name" value="Nucleic acid-binding proteins"/>
    <property type="match status" value="1"/>
</dbReference>
<dbReference type="Gene3D" id="4.10.950.10">
    <property type="entry name" value="Ribosomal protein L2, domain 3"/>
    <property type="match status" value="1"/>
</dbReference>
<dbReference type="HAMAP" id="MF_01320_B">
    <property type="entry name" value="Ribosomal_uL2_B"/>
    <property type="match status" value="1"/>
</dbReference>
<dbReference type="InterPro" id="IPR012340">
    <property type="entry name" value="NA-bd_OB-fold"/>
</dbReference>
<dbReference type="InterPro" id="IPR014722">
    <property type="entry name" value="Rib_uL2_dom2"/>
</dbReference>
<dbReference type="InterPro" id="IPR002171">
    <property type="entry name" value="Ribosomal_uL2"/>
</dbReference>
<dbReference type="InterPro" id="IPR005880">
    <property type="entry name" value="Ribosomal_uL2_bac/org-type"/>
</dbReference>
<dbReference type="InterPro" id="IPR022669">
    <property type="entry name" value="Ribosomal_uL2_C"/>
</dbReference>
<dbReference type="InterPro" id="IPR022671">
    <property type="entry name" value="Ribosomal_uL2_CS"/>
</dbReference>
<dbReference type="InterPro" id="IPR014726">
    <property type="entry name" value="Ribosomal_uL2_dom3"/>
</dbReference>
<dbReference type="InterPro" id="IPR022666">
    <property type="entry name" value="Ribosomal_uL2_RNA-bd_dom"/>
</dbReference>
<dbReference type="InterPro" id="IPR008991">
    <property type="entry name" value="Translation_prot_SH3-like_sf"/>
</dbReference>
<dbReference type="NCBIfam" id="TIGR01171">
    <property type="entry name" value="rplB_bact"/>
    <property type="match status" value="1"/>
</dbReference>
<dbReference type="PANTHER" id="PTHR13691:SF5">
    <property type="entry name" value="LARGE RIBOSOMAL SUBUNIT PROTEIN UL2M"/>
    <property type="match status" value="1"/>
</dbReference>
<dbReference type="PANTHER" id="PTHR13691">
    <property type="entry name" value="RIBOSOMAL PROTEIN L2"/>
    <property type="match status" value="1"/>
</dbReference>
<dbReference type="Pfam" id="PF00181">
    <property type="entry name" value="Ribosomal_L2"/>
    <property type="match status" value="1"/>
</dbReference>
<dbReference type="Pfam" id="PF03947">
    <property type="entry name" value="Ribosomal_L2_C"/>
    <property type="match status" value="1"/>
</dbReference>
<dbReference type="PIRSF" id="PIRSF002158">
    <property type="entry name" value="Ribosomal_L2"/>
    <property type="match status" value="1"/>
</dbReference>
<dbReference type="SMART" id="SM01383">
    <property type="entry name" value="Ribosomal_L2"/>
    <property type="match status" value="1"/>
</dbReference>
<dbReference type="SMART" id="SM01382">
    <property type="entry name" value="Ribosomal_L2_C"/>
    <property type="match status" value="1"/>
</dbReference>
<dbReference type="SUPFAM" id="SSF50249">
    <property type="entry name" value="Nucleic acid-binding proteins"/>
    <property type="match status" value="1"/>
</dbReference>
<dbReference type="SUPFAM" id="SSF50104">
    <property type="entry name" value="Translation proteins SH3-like domain"/>
    <property type="match status" value="1"/>
</dbReference>
<dbReference type="PROSITE" id="PS00467">
    <property type="entry name" value="RIBOSOMAL_L2"/>
    <property type="match status" value="1"/>
</dbReference>
<reference key="1">
    <citation type="journal article" date="2014" name="Stand. Genomic Sci.">
        <title>Complete genome sequence of Burkholderia phymatum STM815(T), a broad host range and efficient nitrogen-fixing symbiont of Mimosa species.</title>
        <authorList>
            <person name="Moulin L."/>
            <person name="Klonowska A."/>
            <person name="Caroline B."/>
            <person name="Booth K."/>
            <person name="Vriezen J.A."/>
            <person name="Melkonian R."/>
            <person name="James E.K."/>
            <person name="Young J.P."/>
            <person name="Bena G."/>
            <person name="Hauser L."/>
            <person name="Land M."/>
            <person name="Kyrpides N."/>
            <person name="Bruce D."/>
            <person name="Chain P."/>
            <person name="Copeland A."/>
            <person name="Pitluck S."/>
            <person name="Woyke T."/>
            <person name="Lizotte-Waniewski M."/>
            <person name="Bristow J."/>
            <person name="Riley M."/>
        </authorList>
    </citation>
    <scope>NUCLEOTIDE SEQUENCE [LARGE SCALE GENOMIC DNA]</scope>
    <source>
        <strain>DSM 17167 / CIP 108236 / LMG 21445 / STM815</strain>
    </source>
</reference>
<protein>
    <recommendedName>
        <fullName evidence="1">Large ribosomal subunit protein uL2</fullName>
    </recommendedName>
    <alternativeName>
        <fullName evidence="3">50S ribosomal protein L2</fullName>
    </alternativeName>
</protein>
<gene>
    <name evidence="1" type="primary">rplB</name>
    <name type="ordered locus">Bphy_2837</name>
</gene>
<comment type="function">
    <text evidence="1">One of the primary rRNA binding proteins. Required for association of the 30S and 50S subunits to form the 70S ribosome, for tRNA binding and peptide bond formation. It has been suggested to have peptidyltransferase activity; this is somewhat controversial. Makes several contacts with the 16S rRNA in the 70S ribosome.</text>
</comment>
<comment type="subunit">
    <text evidence="1">Part of the 50S ribosomal subunit. Forms a bridge to the 30S subunit in the 70S ribosome.</text>
</comment>
<comment type="similarity">
    <text evidence="1">Belongs to the universal ribosomal protein uL2 family.</text>
</comment>
<evidence type="ECO:0000255" key="1">
    <source>
        <dbReference type="HAMAP-Rule" id="MF_01320"/>
    </source>
</evidence>
<evidence type="ECO:0000256" key="2">
    <source>
        <dbReference type="SAM" id="MobiDB-lite"/>
    </source>
</evidence>
<evidence type="ECO:0000305" key="3"/>
<name>RL2_PARP8</name>
<accession>B2JIG3</accession>
<feature type="chain" id="PRO_1000141519" description="Large ribosomal subunit protein uL2">
    <location>
        <begin position="1"/>
        <end position="275"/>
    </location>
</feature>
<feature type="region of interest" description="Disordered" evidence="2">
    <location>
        <begin position="28"/>
        <end position="59"/>
    </location>
</feature>
<feature type="region of interest" description="Disordered" evidence="2">
    <location>
        <begin position="224"/>
        <end position="275"/>
    </location>
</feature>
<feature type="compositionally biased region" description="Polar residues" evidence="2">
    <location>
        <begin position="35"/>
        <end position="46"/>
    </location>
</feature>
<feature type="compositionally biased region" description="Basic residues" evidence="2">
    <location>
        <begin position="50"/>
        <end position="59"/>
    </location>
</feature>
<organism>
    <name type="scientific">Paraburkholderia phymatum (strain DSM 17167 / CIP 108236 / LMG 21445 / STM815)</name>
    <name type="common">Burkholderia phymatum</name>
    <dbReference type="NCBI Taxonomy" id="391038"/>
    <lineage>
        <taxon>Bacteria</taxon>
        <taxon>Pseudomonadati</taxon>
        <taxon>Pseudomonadota</taxon>
        <taxon>Betaproteobacteria</taxon>
        <taxon>Burkholderiales</taxon>
        <taxon>Burkholderiaceae</taxon>
        <taxon>Paraburkholderia</taxon>
    </lineage>
</organism>
<sequence length="275" mass="30138">MAIVKVKPTSPGRRAMVKVVNKDLHKGKPYAPLLDTQSSTAGRNNNGHITTRHKGGGHKHHYRIVDFRRTKDGIPAKVERLEYDPNRSANIALVVYADGERRYIIAPKGVTVGQQLMSGSEAPIRAGNTLPIRNIPVGTTIHCIEMLPGKGAQMARSAGTSAMLLAREGTYAQVRLRSGEIRRVHIECRATIGEVGNEEHSLRQIGKAGANRWRGIRPTVRGVAMNPVDHPHGGGEGKTAAGRDPVSPWGTPTKGYRTRSNKRTTSMIVQRRHKR</sequence>
<proteinExistence type="inferred from homology"/>